<name>GDNF_MOUSE</name>
<proteinExistence type="evidence at protein level"/>
<protein>
    <recommendedName>
        <fullName>Glial cell line-derived neurotrophic factor</fullName>
        <shortName>mGDNF</shortName>
    </recommendedName>
    <alternativeName>
        <fullName>Astrocyte-derived trophic factor</fullName>
        <shortName>ATF</shortName>
    </alternativeName>
</protein>
<organism>
    <name type="scientific">Mus musculus</name>
    <name type="common">Mouse</name>
    <dbReference type="NCBI Taxonomy" id="10090"/>
    <lineage>
        <taxon>Eukaryota</taxon>
        <taxon>Metazoa</taxon>
        <taxon>Chordata</taxon>
        <taxon>Craniata</taxon>
        <taxon>Vertebrata</taxon>
        <taxon>Euteleostomi</taxon>
        <taxon>Mammalia</taxon>
        <taxon>Eutheria</taxon>
        <taxon>Euarchontoglires</taxon>
        <taxon>Glires</taxon>
        <taxon>Rodentia</taxon>
        <taxon>Myomorpha</taxon>
        <taxon>Muroidea</taxon>
        <taxon>Muridae</taxon>
        <taxon>Murinae</taxon>
        <taxon>Mus</taxon>
        <taxon>Mus</taxon>
    </lineage>
</organism>
<feature type="signal peptide" evidence="4">
    <location>
        <begin position="1"/>
        <end position="19"/>
    </location>
</feature>
<feature type="propeptide" id="PRO_0000034006" evidence="3">
    <location>
        <begin position="20"/>
        <end position="75"/>
    </location>
</feature>
<feature type="chain" id="PRO_0000034007" description="Glial cell line-derived neurotrophic factor">
    <location>
        <begin position="78"/>
        <end position="211"/>
    </location>
</feature>
<feature type="region of interest" description="Disordered" evidence="5">
    <location>
        <begin position="76"/>
        <end position="113"/>
    </location>
</feature>
<feature type="glycosylation site" description="N-linked (GlcNAc...) asparagine" evidence="4">
    <location>
        <position position="126"/>
    </location>
</feature>
<feature type="glycosylation site" description="N-linked (GlcNAc...) asparagine" evidence="4">
    <location>
        <position position="162"/>
    </location>
</feature>
<feature type="disulfide bond" evidence="1">
    <location>
        <begin position="118"/>
        <end position="179"/>
    </location>
</feature>
<feature type="disulfide bond" evidence="1">
    <location>
        <begin position="145"/>
        <end position="208"/>
    </location>
</feature>
<feature type="disulfide bond" evidence="1">
    <location>
        <begin position="149"/>
        <end position="210"/>
    </location>
</feature>
<feature type="disulfide bond" description="Interchain" evidence="1">
    <location>
        <position position="178"/>
    </location>
</feature>
<feature type="splice variant" id="VSP_026367" description="In isoform 2 and isoform 3." evidence="10 11 12">
    <original>M</original>
    <variation>MGFGPLGVNVQLGVYGDRIRGAAAGRDSKM</variation>
    <location>
        <position position="1"/>
    </location>
</feature>
<feature type="splice variant" id="VSP_006421" description="In isoform 2." evidence="10">
    <original>GKRLLEAPAEDHSLGHRRVPFALTSDS</original>
    <variation>A</variation>
    <location>
        <begin position="25"/>
        <end position="51"/>
    </location>
</feature>
<gene>
    <name type="primary">Gdnf</name>
</gene>
<evidence type="ECO:0000250" key="1"/>
<evidence type="ECO:0000250" key="2">
    <source>
        <dbReference type="UniProtKB" id="P39905"/>
    </source>
</evidence>
<evidence type="ECO:0000250" key="3">
    <source>
        <dbReference type="UniProtKB" id="Q07731"/>
    </source>
</evidence>
<evidence type="ECO:0000255" key="4"/>
<evidence type="ECO:0000256" key="5">
    <source>
        <dbReference type="SAM" id="MobiDB-lite"/>
    </source>
</evidence>
<evidence type="ECO:0000269" key="6">
    <source>
    </source>
</evidence>
<evidence type="ECO:0000269" key="7">
    <source>
    </source>
</evidence>
<evidence type="ECO:0000269" key="8">
    <source>
    </source>
</evidence>
<evidence type="ECO:0000269" key="9">
    <source>
    </source>
</evidence>
<evidence type="ECO:0000303" key="10">
    <source>
    </source>
</evidence>
<evidence type="ECO:0000303" key="11">
    <source>
    </source>
</evidence>
<evidence type="ECO:0000303" key="12">
    <source>
    </source>
</evidence>
<evidence type="ECO:0000305" key="13"/>
<comment type="function">
    <text evidence="2">Neurotrophic factor that enhances survival and morphological differentiation of dopaminergic neurons and increases their high-affinity dopamine uptake. Acts by binding to its coreceptor, GFRA1, leading to autophosphorylation and activation of the RET receptor. Involved in the development of the neural crest.</text>
</comment>
<comment type="subunit">
    <text evidence="2 7">Homodimer; disulfide-linked (By similarity). Interacts with GFRA1 coreceptor and RET: forms a 2:2:2 ternary complex composed of GDNF ligand, GFRA1 and RET receptor (By similarity). Interacts (via propeptide) with SORL1 (via N-terminal ectodomain); this interaction affects GDNF-regulated, but not constitutive secretion (PubMed:21994944). Also interacts with SORL1 in complex with GFRA1; this interaction leads to GDNF endocytosis and lysosomal degradation (By similarity).</text>
</comment>
<comment type="subcellular location">
    <subcellularLocation>
        <location evidence="2">Secreted</location>
    </subcellularLocation>
</comment>
<comment type="alternative products">
    <event type="alternative splicing"/>
    <isoform>
        <id>P48540-1</id>
        <name>1</name>
        <name>GDNF-alpha</name>
        <sequence type="displayed"/>
    </isoform>
    <isoform>
        <id>P48540-2</id>
        <name>2</name>
        <name>GDNF-beta</name>
        <sequence type="described" ref="VSP_026367 VSP_006421"/>
    </isoform>
    <isoform>
        <id>P48540-3</id>
        <name>3</name>
        <sequence type="described" ref="VSP_026367"/>
    </isoform>
</comment>
<comment type="tissue specificity">
    <text evidence="6 8">Expressed in both the central nervous system (CNS) and in non-CNS tissues. Expressed in a highly dynamic pattern in the anterior neuroectoderm during the early stages of neurogenesis between 7.5 dpc and 10.5 dpc. Beginning at 10.5 dpc, expression begins in mesenchymal tissues of several organs including the digestive tract, kidney, testis, frontonasal mass, tooth primordium, tongue, mandible, whisker follicles, ear, eye, limb bud and in distinct regions of the brain. Also expressed in the heart, ileum, liver and muscle.</text>
</comment>
<comment type="developmental stage">
    <text evidence="8">First detected at 7.5 dpc, reaches its peak around 9.5 dpc and declines considerably after 10.5 dpc.</text>
</comment>
<comment type="induction">
    <text evidence="9">Expression in C6 glioma cells was transiently induced by treatment with phorbol myristate acetate (PMA), but not by forskolin.</text>
</comment>
<comment type="similarity">
    <text evidence="13">Belongs to the TGF-beta family. GDNF subfamily.</text>
</comment>
<keyword id="KW-0025">Alternative splicing</keyword>
<keyword id="KW-0165">Cleavage on pair of basic residues</keyword>
<keyword id="KW-1015">Disulfide bond</keyword>
<keyword id="KW-0325">Glycoprotein</keyword>
<keyword id="KW-0339">Growth factor</keyword>
<keyword id="KW-1185">Reference proteome</keyword>
<keyword id="KW-0964">Secreted</keyword>
<keyword id="KW-0732">Signal</keyword>
<sequence length="211" mass="23662">MKLWDVVAVCLVLLHTASAFPLPAGKRLLEAPAEDHSLGHRRVPFALTSDSNMPEDYPDQFDDVMDFIQATIKRLKRSPDKQAAALPRRERNRQAAAASPENSRGKGRRGQRGKNRGCVLTAIHLNVTDLGLGYETKEELIFRYCSGSCESAETMYDKILKNLSRSRRLTSDKVGQACCRPVAFDDDLSFLDDNLVYHILRKHSAKRCGCI</sequence>
<dbReference type="EMBL" id="D49921">
    <property type="protein sequence ID" value="BAA08660.1"/>
    <property type="molecule type" value="mRNA"/>
</dbReference>
<dbReference type="EMBL" id="U36449">
    <property type="protein sequence ID" value="AAB52953.1"/>
    <property type="molecule type" value="Genomic_DNA"/>
</dbReference>
<dbReference type="EMBL" id="D88264">
    <property type="protein sequence ID" value="BAA13566.1"/>
    <property type="molecule type" value="mRNA"/>
</dbReference>
<dbReference type="EMBL" id="D88352">
    <property type="protein sequence ID" value="BAB12221.1"/>
    <property type="molecule type" value="Genomic_DNA"/>
</dbReference>
<dbReference type="EMBL" id="D88352">
    <property type="protein sequence ID" value="BAA13591.1"/>
    <property type="molecule type" value="Genomic_DNA"/>
</dbReference>
<dbReference type="EMBL" id="U37459">
    <property type="protein sequence ID" value="AAB18672.1"/>
    <property type="molecule type" value="mRNA"/>
</dbReference>
<dbReference type="EMBL" id="U66195">
    <property type="protein sequence ID" value="AAB07463.1"/>
    <property type="molecule type" value="Genomic_DNA"/>
</dbReference>
<dbReference type="EMBL" id="U75532">
    <property type="protein sequence ID" value="AAB18343.1"/>
    <property type="molecule type" value="mRNA"/>
</dbReference>
<dbReference type="EMBL" id="BC119031">
    <property type="protein sequence ID" value="AAI19032.1"/>
    <property type="molecule type" value="mRNA"/>
</dbReference>
<dbReference type="CCDS" id="CCDS27371.1">
    <molecule id="P48540-3"/>
</dbReference>
<dbReference type="PIR" id="I49686">
    <property type="entry name" value="I49686"/>
</dbReference>
<dbReference type="RefSeq" id="NP_001288261.1">
    <molecule id="P48540-2"/>
    <property type="nucleotide sequence ID" value="NM_001301332.1"/>
</dbReference>
<dbReference type="RefSeq" id="NP_001288286.1">
    <molecule id="P48540-1"/>
    <property type="nucleotide sequence ID" value="NM_001301357.1"/>
</dbReference>
<dbReference type="RefSeq" id="NP_034405.1">
    <molecule id="P48540-3"/>
    <property type="nucleotide sequence ID" value="NM_010275.3"/>
</dbReference>
<dbReference type="SMR" id="P48540"/>
<dbReference type="CORUM" id="P48540"/>
<dbReference type="FunCoup" id="P48540">
    <property type="interactions" value="575"/>
</dbReference>
<dbReference type="STRING" id="10090.ENSMUSP00000022744"/>
<dbReference type="GlyCosmos" id="P48540">
    <property type="glycosylation" value="2 sites, No reported glycans"/>
</dbReference>
<dbReference type="GlyGen" id="P48540">
    <property type="glycosylation" value="2 sites"/>
</dbReference>
<dbReference type="iPTMnet" id="P48540"/>
<dbReference type="PhosphoSitePlus" id="P48540"/>
<dbReference type="PaxDb" id="10090-ENSMUSP00000022744"/>
<dbReference type="Antibodypedia" id="3924">
    <property type="antibodies" value="555 antibodies from 42 providers"/>
</dbReference>
<dbReference type="DNASU" id="14573"/>
<dbReference type="Ensembl" id="ENSMUST00000022744.5">
    <molecule id="P48540-3"/>
    <property type="protein sequence ID" value="ENSMUSP00000022744.4"/>
    <property type="gene ID" value="ENSMUSG00000022144.5"/>
</dbReference>
<dbReference type="GeneID" id="14573"/>
<dbReference type="KEGG" id="mmu:14573"/>
<dbReference type="UCSC" id="uc007vee.2">
    <molecule id="P48540-3"/>
    <property type="organism name" value="mouse"/>
</dbReference>
<dbReference type="UCSC" id="uc007vef.2">
    <molecule id="P48540-2"/>
    <property type="organism name" value="mouse"/>
</dbReference>
<dbReference type="UCSC" id="uc056yyf.1">
    <molecule id="P48540-1"/>
    <property type="organism name" value="mouse"/>
</dbReference>
<dbReference type="AGR" id="MGI:107430"/>
<dbReference type="CTD" id="2668"/>
<dbReference type="MGI" id="MGI:107430">
    <property type="gene designation" value="Gdnf"/>
</dbReference>
<dbReference type="VEuPathDB" id="HostDB:ENSMUSG00000022144"/>
<dbReference type="eggNOG" id="ENOG502QWCH">
    <property type="taxonomic scope" value="Eukaryota"/>
</dbReference>
<dbReference type="GeneTree" id="ENSGT00950000182993"/>
<dbReference type="HOGENOM" id="CLU_102221_1_0_1"/>
<dbReference type="InParanoid" id="P48540"/>
<dbReference type="OMA" id="DYSDQFD"/>
<dbReference type="OrthoDB" id="72267at9989"/>
<dbReference type="PhylomeDB" id="P48540"/>
<dbReference type="TreeFam" id="TF332366"/>
<dbReference type="Reactome" id="R-MMU-5673001">
    <property type="pathway name" value="RAF/MAP kinase cascade"/>
</dbReference>
<dbReference type="Reactome" id="R-MMU-8853659">
    <property type="pathway name" value="RET signaling"/>
</dbReference>
<dbReference type="BioGRID-ORCS" id="14573">
    <property type="hits" value="3 hits in 81 CRISPR screens"/>
</dbReference>
<dbReference type="PRO" id="PR:P48540"/>
<dbReference type="Proteomes" id="UP000000589">
    <property type="component" value="Chromosome 15"/>
</dbReference>
<dbReference type="RNAct" id="P48540">
    <property type="molecule type" value="protein"/>
</dbReference>
<dbReference type="Bgee" id="ENSMUSG00000022144">
    <property type="expression patterns" value="Expressed in metanephric mesenchyme and 125 other cell types or tissues"/>
</dbReference>
<dbReference type="GO" id="GO:0005576">
    <property type="term" value="C:extracellular region"/>
    <property type="evidence" value="ECO:0000250"/>
    <property type="project" value="UniProtKB"/>
</dbReference>
<dbReference type="GO" id="GO:0005615">
    <property type="term" value="C:extracellular space"/>
    <property type="evidence" value="ECO:0007669"/>
    <property type="project" value="Ensembl"/>
</dbReference>
<dbReference type="GO" id="GO:0005794">
    <property type="term" value="C:Golgi apparatus"/>
    <property type="evidence" value="ECO:0007669"/>
    <property type="project" value="Ensembl"/>
</dbReference>
<dbReference type="GO" id="GO:0030116">
    <property type="term" value="F:glial cell-derived neurotrophic factor receptor binding"/>
    <property type="evidence" value="ECO:0007669"/>
    <property type="project" value="InterPro"/>
</dbReference>
<dbReference type="GO" id="GO:0008083">
    <property type="term" value="F:growth factor activity"/>
    <property type="evidence" value="ECO:0000250"/>
    <property type="project" value="UniProtKB"/>
</dbReference>
<dbReference type="GO" id="GO:0042803">
    <property type="term" value="F:protein homodimerization activity"/>
    <property type="evidence" value="ECO:0000250"/>
    <property type="project" value="UniProtKB"/>
</dbReference>
<dbReference type="GO" id="GO:0030971">
    <property type="term" value="F:receptor tyrosine kinase binding"/>
    <property type="evidence" value="ECO:0007669"/>
    <property type="project" value="InterPro"/>
</dbReference>
<dbReference type="GO" id="GO:0005160">
    <property type="term" value="F:transforming growth factor beta receptor binding"/>
    <property type="evidence" value="ECO:0000304"/>
    <property type="project" value="MGI"/>
</dbReference>
<dbReference type="GO" id="GO:0001658">
    <property type="term" value="P:branching involved in ureteric bud morphogenesis"/>
    <property type="evidence" value="ECO:0000314"/>
    <property type="project" value="MGI"/>
</dbReference>
<dbReference type="GO" id="GO:0007169">
    <property type="term" value="P:cell surface receptor protein tyrosine kinase signaling pathway"/>
    <property type="evidence" value="ECO:0000304"/>
    <property type="project" value="MGI"/>
</dbReference>
<dbReference type="GO" id="GO:0071679">
    <property type="term" value="P:commissural neuron axon guidance"/>
    <property type="evidence" value="ECO:0000316"/>
    <property type="project" value="ARUK-UCL"/>
</dbReference>
<dbReference type="GO" id="GO:0021516">
    <property type="term" value="P:dorsal spinal cord development"/>
    <property type="evidence" value="ECO:0000315"/>
    <property type="project" value="ARUK-UCL"/>
</dbReference>
<dbReference type="GO" id="GO:0048568">
    <property type="term" value="P:embryonic organ development"/>
    <property type="evidence" value="ECO:0000315"/>
    <property type="project" value="ARUK-UCL"/>
</dbReference>
<dbReference type="GO" id="GO:0048484">
    <property type="term" value="P:enteric nervous system development"/>
    <property type="evidence" value="ECO:0000314"/>
    <property type="project" value="UniProtKB"/>
</dbReference>
<dbReference type="GO" id="GO:0035860">
    <property type="term" value="P:glial cell-derived neurotrophic factor receptor signaling pathway"/>
    <property type="evidence" value="ECO:0000250"/>
    <property type="project" value="UniProtKB"/>
</dbReference>
<dbReference type="GO" id="GO:0003337">
    <property type="term" value="P:mesenchymal to epithelial transition involved in metanephros morphogenesis"/>
    <property type="evidence" value="ECO:0000270"/>
    <property type="project" value="UniProtKB"/>
</dbReference>
<dbReference type="GO" id="GO:0001656">
    <property type="term" value="P:metanephros development"/>
    <property type="evidence" value="ECO:0000315"/>
    <property type="project" value="UniProtKB"/>
</dbReference>
<dbReference type="GO" id="GO:0048255">
    <property type="term" value="P:mRNA stabilization"/>
    <property type="evidence" value="ECO:0000250"/>
    <property type="project" value="UniProtKB"/>
</dbReference>
<dbReference type="GO" id="GO:2001240">
    <property type="term" value="P:negative regulation of extrinsic apoptotic signaling pathway in absence of ligand"/>
    <property type="evidence" value="ECO:0007669"/>
    <property type="project" value="Ensembl"/>
</dbReference>
<dbReference type="GO" id="GO:0043524">
    <property type="term" value="P:negative regulation of neuron apoptotic process"/>
    <property type="evidence" value="ECO:0000315"/>
    <property type="project" value="MGI"/>
</dbReference>
<dbReference type="GO" id="GO:0007399">
    <property type="term" value="P:nervous system development"/>
    <property type="evidence" value="ECO:0000315"/>
    <property type="project" value="MGI"/>
</dbReference>
<dbReference type="GO" id="GO:0001755">
    <property type="term" value="P:neural crest cell migration"/>
    <property type="evidence" value="ECO:0000250"/>
    <property type="project" value="UniProtKB"/>
</dbReference>
<dbReference type="GO" id="GO:1901166">
    <property type="term" value="P:neural crest cell migration involved in autonomic nervous system development"/>
    <property type="evidence" value="ECO:0000266"/>
    <property type="project" value="MGI"/>
</dbReference>
<dbReference type="GO" id="GO:0031175">
    <property type="term" value="P:neuron projection development"/>
    <property type="evidence" value="ECO:0000250"/>
    <property type="project" value="UniProtKB"/>
</dbReference>
<dbReference type="GO" id="GO:0001759">
    <property type="term" value="P:organ induction"/>
    <property type="evidence" value="ECO:0000316"/>
    <property type="project" value="MGI"/>
</dbReference>
<dbReference type="GO" id="GO:0007422">
    <property type="term" value="P:peripheral nervous system development"/>
    <property type="evidence" value="ECO:0000315"/>
    <property type="project" value="MGI"/>
</dbReference>
<dbReference type="GO" id="GO:0030432">
    <property type="term" value="P:peristalsis"/>
    <property type="evidence" value="ECO:0000315"/>
    <property type="project" value="UniProtKB"/>
</dbReference>
<dbReference type="GO" id="GO:0090190">
    <property type="term" value="P:positive regulation of branching involved in ureteric bud morphogenesis"/>
    <property type="evidence" value="ECO:0000315"/>
    <property type="project" value="UniProtKB"/>
</dbReference>
<dbReference type="GO" id="GO:0045597">
    <property type="term" value="P:positive regulation of cell differentiation"/>
    <property type="evidence" value="ECO:0000266"/>
    <property type="project" value="MGI"/>
</dbReference>
<dbReference type="GO" id="GO:0008284">
    <property type="term" value="P:positive regulation of cell population proliferation"/>
    <property type="evidence" value="ECO:0000266"/>
    <property type="project" value="MGI"/>
</dbReference>
<dbReference type="GO" id="GO:0072108">
    <property type="term" value="P:positive regulation of mesenchymal to epithelial transition involved in metanephros morphogenesis"/>
    <property type="evidence" value="ECO:0000315"/>
    <property type="project" value="UniProtKB"/>
</dbReference>
<dbReference type="GO" id="GO:0045944">
    <property type="term" value="P:positive regulation of transcription by RNA polymerase II"/>
    <property type="evidence" value="ECO:0000250"/>
    <property type="project" value="UniProtKB"/>
</dbReference>
<dbReference type="GO" id="GO:0072107">
    <property type="term" value="P:positive regulation of ureteric bud formation"/>
    <property type="evidence" value="ECO:0000250"/>
    <property type="project" value="UniProtKB"/>
</dbReference>
<dbReference type="GO" id="GO:0021784">
    <property type="term" value="P:postganglionic parasympathetic fiber development"/>
    <property type="evidence" value="ECO:0000315"/>
    <property type="project" value="UniProtKB"/>
</dbReference>
<dbReference type="GO" id="GO:0001941">
    <property type="term" value="P:postsynaptic membrane organization"/>
    <property type="evidence" value="ECO:0000314"/>
    <property type="project" value="MGI"/>
</dbReference>
<dbReference type="GO" id="GO:0051584">
    <property type="term" value="P:regulation of dopamine uptake involved in synaptic transmission"/>
    <property type="evidence" value="ECO:0000250"/>
    <property type="project" value="UniProtKB"/>
</dbReference>
<dbReference type="GO" id="GO:0010468">
    <property type="term" value="P:regulation of gene expression"/>
    <property type="evidence" value="ECO:0000266"/>
    <property type="project" value="MGI"/>
</dbReference>
<dbReference type="GO" id="GO:0060688">
    <property type="term" value="P:regulation of morphogenesis of a branching structure"/>
    <property type="evidence" value="ECO:0000314"/>
    <property type="project" value="MGI"/>
</dbReference>
<dbReference type="GO" id="GO:2001260">
    <property type="term" value="P:regulation of semaphorin-plexin signaling pathway"/>
    <property type="evidence" value="ECO:0000316"/>
    <property type="project" value="ARUK-UCL"/>
</dbReference>
<dbReference type="GO" id="GO:0048485">
    <property type="term" value="P:sympathetic nervous system development"/>
    <property type="evidence" value="ECO:0000315"/>
    <property type="project" value="UniProtKB"/>
</dbReference>
<dbReference type="GO" id="GO:0007179">
    <property type="term" value="P:transforming growth factor beta receptor signaling pathway"/>
    <property type="evidence" value="ECO:0000304"/>
    <property type="project" value="MGI"/>
</dbReference>
<dbReference type="GO" id="GO:0001657">
    <property type="term" value="P:ureteric bud development"/>
    <property type="evidence" value="ECO:0000314"/>
    <property type="project" value="MGI"/>
</dbReference>
<dbReference type="GO" id="GO:0060676">
    <property type="term" value="P:ureteric bud formation"/>
    <property type="evidence" value="ECO:0000315"/>
    <property type="project" value="UniProtKB"/>
</dbReference>
<dbReference type="CDD" id="cd19380">
    <property type="entry name" value="TGF_beta_GDNF"/>
    <property type="match status" value="1"/>
</dbReference>
<dbReference type="FunFam" id="2.10.90.10:FF:000015">
    <property type="entry name" value="Glial cell line-derived neurotrophic factor"/>
    <property type="match status" value="1"/>
</dbReference>
<dbReference type="Gene3D" id="2.10.90.10">
    <property type="entry name" value="Cystine-knot cytokines"/>
    <property type="match status" value="1"/>
</dbReference>
<dbReference type="InterPro" id="IPR029034">
    <property type="entry name" value="Cystine-knot_cytokine"/>
</dbReference>
<dbReference type="InterPro" id="IPR016649">
    <property type="entry name" value="GDNF"/>
</dbReference>
<dbReference type="InterPro" id="IPR043401">
    <property type="entry name" value="GDNF_fam"/>
</dbReference>
<dbReference type="InterPro" id="IPR047020">
    <property type="entry name" value="GDNF_TGF-b-like"/>
</dbReference>
<dbReference type="InterPro" id="IPR001839">
    <property type="entry name" value="TGF-b_C"/>
</dbReference>
<dbReference type="PANTHER" id="PTHR12173">
    <property type="entry name" value="GDNF SUBFAMILY OF TGF-BETA FAMILY"/>
    <property type="match status" value="1"/>
</dbReference>
<dbReference type="PANTHER" id="PTHR12173:SF1">
    <property type="entry name" value="GLIAL CELL LINE-DERIVED NEUROTROPHIC FACTOR"/>
    <property type="match status" value="1"/>
</dbReference>
<dbReference type="Pfam" id="PF00019">
    <property type="entry name" value="TGF_beta"/>
    <property type="match status" value="1"/>
</dbReference>
<dbReference type="PIRSF" id="PIRSF016238">
    <property type="entry name" value="GDNF"/>
    <property type="match status" value="1"/>
</dbReference>
<dbReference type="SMART" id="SM00204">
    <property type="entry name" value="TGFB"/>
    <property type="match status" value="1"/>
</dbReference>
<dbReference type="SUPFAM" id="SSF57501">
    <property type="entry name" value="Cystine-knot cytokines"/>
    <property type="match status" value="1"/>
</dbReference>
<dbReference type="PROSITE" id="PS51362">
    <property type="entry name" value="TGF_BETA_2"/>
    <property type="match status" value="1"/>
</dbReference>
<accession>P48540</accession>
<accession>O09058</accession>
<accession>P70446</accession>
<accession>P97919</accession>
<accession>P97920</accession>
<accession>Q6LEL9</accession>
<reference key="1">
    <citation type="journal article" date="1995" name="J. Neurosci. Res.">
        <title>Spontaneously immortalized adult mouse Schwann cells secrete autocrine and paracrine growth-promoting activities.</title>
        <authorList>
            <person name="Watabe K."/>
            <person name="Fukuda T."/>
            <person name="Tanaka J."/>
            <person name="Honda H."/>
            <person name="Toyohara K."/>
            <person name="Sakai O."/>
        </authorList>
    </citation>
    <scope>NUCLEOTIDE SEQUENCE [MRNA] (ISOFORM 1)</scope>
    <source>
        <strain>ICR</strain>
        <tissue>Spinal ganglion</tissue>
    </source>
</reference>
<reference key="2">
    <citation type="journal article" date="1996" name="Mech. Dev.">
        <title>Embryonic expression of glial cell-line derived neurotrophic factor (GDNF) suggests multiple developmental roles in neural differentiation and epithelial-mesenchymal interactions.</title>
        <authorList>
            <person name="Hellmich H.L."/>
            <person name="Kos L."/>
            <person name="Cho E.S."/>
            <person name="Mahon K.A."/>
            <person name="Zimmer A."/>
        </authorList>
    </citation>
    <scope>NUCLEOTIDE SEQUENCE [GENOMIC DNA]</scope>
    <scope>TISSUE SPECIFICITY</scope>
    <scope>DEVELOPMENTAL STAGE</scope>
    <source>
        <strain>129/SvJ</strain>
        <tissue>Glial cell</tissue>
    </source>
</reference>
<reference key="3">
    <citation type="journal article" date="1997" name="Gene">
        <title>Cloning and structural organization of the gene encoding the mouse glial cell line-derived neurotrophic factor, GDNF.</title>
        <authorList>
            <person name="Matsushita N."/>
            <person name="Fujita Y."/>
            <person name="Tanaka M."/>
            <person name="Nagatsu T."/>
            <person name="Kiuchi K."/>
        </authorList>
    </citation>
    <scope>NUCLEOTIDE SEQUENCE [MRNA] (ISOFORM 3)</scope>
    <scope>NUCLEOTIDE SEQUENCE [GENOMIC DNA]</scope>
    <scope>INDUCTION</scope>
    <source>
        <tissue>Neonatal brain</tissue>
    </source>
</reference>
<reference key="4">
    <citation type="journal article" date="1998" name="Sheng Wu Hua Xue Yu Sheng Wu Wu Li Xue Bao">
        <title>Cloning and characterization of mouse glial cell line-derived neurotrophic growth factor (GDNF).</title>
        <authorList>
            <person name="Wang F.-J."/>
            <person name="Zhao J."/>
            <person name="Too H.P."/>
        </authorList>
    </citation>
    <scope>NUCLEOTIDE SEQUENCE [MRNA] (ISOFORM 3)</scope>
    <scope>PARTIAL NUCLEOTIDE SEQUENCE [GENOMIC DNA]</scope>
    <scope>NUCLEOTIDE SEQUENCE [MRNA] OF 1-103 (ISOFORM 2)</scope>
    <scope>TISSUE SPECIFICITY</scope>
    <source>
        <strain>BALB/cJ</strain>
        <strain>C57BL/10J</strain>
        <tissue>Brain</tissue>
        <tissue>Glial cell</tissue>
    </source>
</reference>
<reference key="5">
    <citation type="journal article" date="2004" name="Genome Res.">
        <title>The status, quality, and expansion of the NIH full-length cDNA project: the Mammalian Gene Collection (MGC).</title>
        <authorList>
            <consortium name="The MGC Project Team"/>
        </authorList>
    </citation>
    <scope>NUCLEOTIDE SEQUENCE [LARGE SCALE MRNA] (ISOFORM 3)</scope>
    <source>
        <tissue>Brain</tissue>
    </source>
</reference>
<reference key="6">
    <citation type="journal article" date="2011" name="J. Biol. Chem.">
        <title>Sorting protein-related receptor SorLA controls regulated secretion of glial cell line-derived neurotrophic factor.</title>
        <authorList>
            <person name="Geng Z."/>
            <person name="Xu F.Y."/>
            <person name="Huang S.H."/>
            <person name="Chen Z.Y."/>
        </authorList>
    </citation>
    <scope>INTERACTION WITH SORL1</scope>
</reference>